<feature type="chain" id="PRO_0000134802" description="6,7-dimethyl-8-ribityllumazine synthase">
    <location>
        <begin position="1"/>
        <end position="158"/>
    </location>
</feature>
<feature type="active site" description="Proton donor" evidence="1">
    <location>
        <position position="89"/>
    </location>
</feature>
<feature type="binding site" evidence="1">
    <location>
        <position position="22"/>
    </location>
    <ligand>
        <name>5-amino-6-(D-ribitylamino)uracil</name>
        <dbReference type="ChEBI" id="CHEBI:15934"/>
    </ligand>
</feature>
<feature type="binding site" evidence="1">
    <location>
        <begin position="57"/>
        <end position="59"/>
    </location>
    <ligand>
        <name>5-amino-6-(D-ribitylamino)uracil</name>
        <dbReference type="ChEBI" id="CHEBI:15934"/>
    </ligand>
</feature>
<feature type="binding site" evidence="1">
    <location>
        <begin position="81"/>
        <end position="83"/>
    </location>
    <ligand>
        <name>5-amino-6-(D-ribitylamino)uracil</name>
        <dbReference type="ChEBI" id="CHEBI:15934"/>
    </ligand>
</feature>
<feature type="binding site" evidence="1">
    <location>
        <begin position="86"/>
        <end position="87"/>
    </location>
    <ligand>
        <name>(2S)-2-hydroxy-3-oxobutyl phosphate</name>
        <dbReference type="ChEBI" id="CHEBI:58830"/>
    </ligand>
</feature>
<feature type="binding site" evidence="1">
    <location>
        <position position="114"/>
    </location>
    <ligand>
        <name>5-amino-6-(D-ribitylamino)uracil</name>
        <dbReference type="ChEBI" id="CHEBI:15934"/>
    </ligand>
</feature>
<feature type="binding site" evidence="1">
    <location>
        <position position="128"/>
    </location>
    <ligand>
        <name>(2S)-2-hydroxy-3-oxobutyl phosphate</name>
        <dbReference type="ChEBI" id="CHEBI:58830"/>
    </ligand>
</feature>
<sequence length="158" mass="16689">MNVVQGNIEAKNAKVAIVISRFNSFLVESLLEGALDTLKRFGQVSDENITVVRVPGAVELPLAARRVAASGKFDGIIALGAVIRGGTPHFDFVAGECNKGLAQIALEFDLPVAFGVLTTDTIEQAIERSGTKAGNKGGEAALSLLEMVNVLQQLEQQL</sequence>
<keyword id="KW-1185">Reference proteome</keyword>
<keyword id="KW-0686">Riboflavin biosynthesis</keyword>
<keyword id="KW-0808">Transferase</keyword>
<accession>Q8EBP3</accession>
<name>RISB_SHEON</name>
<reference key="1">
    <citation type="journal article" date="2002" name="Nat. Biotechnol.">
        <title>Genome sequence of the dissimilatory metal ion-reducing bacterium Shewanella oneidensis.</title>
        <authorList>
            <person name="Heidelberg J.F."/>
            <person name="Paulsen I.T."/>
            <person name="Nelson K.E."/>
            <person name="Gaidos E.J."/>
            <person name="Nelson W.C."/>
            <person name="Read T.D."/>
            <person name="Eisen J.A."/>
            <person name="Seshadri R."/>
            <person name="Ward N.L."/>
            <person name="Methe B.A."/>
            <person name="Clayton R.A."/>
            <person name="Meyer T."/>
            <person name="Tsapin A."/>
            <person name="Scott J."/>
            <person name="Beanan M.J."/>
            <person name="Brinkac L.M."/>
            <person name="Daugherty S.C."/>
            <person name="DeBoy R.T."/>
            <person name="Dodson R.J."/>
            <person name="Durkin A.S."/>
            <person name="Haft D.H."/>
            <person name="Kolonay J.F."/>
            <person name="Madupu R."/>
            <person name="Peterson J.D."/>
            <person name="Umayam L.A."/>
            <person name="White O."/>
            <person name="Wolf A.M."/>
            <person name="Vamathevan J.J."/>
            <person name="Weidman J.F."/>
            <person name="Impraim M."/>
            <person name="Lee K."/>
            <person name="Berry K.J."/>
            <person name="Lee C."/>
            <person name="Mueller J."/>
            <person name="Khouri H.M."/>
            <person name="Gill J."/>
            <person name="Utterback T.R."/>
            <person name="McDonald L.A."/>
            <person name="Feldblyum T.V."/>
            <person name="Smith H.O."/>
            <person name="Venter J.C."/>
            <person name="Nealson K.H."/>
            <person name="Fraser C.M."/>
        </authorList>
    </citation>
    <scope>NUCLEOTIDE SEQUENCE [LARGE SCALE GENOMIC DNA]</scope>
    <source>
        <strain>ATCC 700550 / JCM 31522 / CIP 106686 / LMG 19005 / NCIMB 14063 / MR-1</strain>
    </source>
</reference>
<evidence type="ECO:0000255" key="1">
    <source>
        <dbReference type="HAMAP-Rule" id="MF_00178"/>
    </source>
</evidence>
<comment type="function">
    <text evidence="1">Catalyzes the formation of 6,7-dimethyl-8-ribityllumazine by condensation of 5-amino-6-(D-ribitylamino)uracil with 3,4-dihydroxy-2-butanone 4-phosphate. This is the penultimate step in the biosynthesis of riboflavin.</text>
</comment>
<comment type="catalytic activity">
    <reaction evidence="1">
        <text>(2S)-2-hydroxy-3-oxobutyl phosphate + 5-amino-6-(D-ribitylamino)uracil = 6,7-dimethyl-8-(1-D-ribityl)lumazine + phosphate + 2 H2O + H(+)</text>
        <dbReference type="Rhea" id="RHEA:26152"/>
        <dbReference type="ChEBI" id="CHEBI:15377"/>
        <dbReference type="ChEBI" id="CHEBI:15378"/>
        <dbReference type="ChEBI" id="CHEBI:15934"/>
        <dbReference type="ChEBI" id="CHEBI:43474"/>
        <dbReference type="ChEBI" id="CHEBI:58201"/>
        <dbReference type="ChEBI" id="CHEBI:58830"/>
        <dbReference type="EC" id="2.5.1.78"/>
    </reaction>
</comment>
<comment type="pathway">
    <text evidence="1">Cofactor biosynthesis; riboflavin biosynthesis; riboflavin from 2-hydroxy-3-oxobutyl phosphate and 5-amino-6-(D-ribitylamino)uracil: step 1/2.</text>
</comment>
<comment type="subunit">
    <text evidence="1">Forms an icosahedral capsid composed of 60 subunits, arranged as a dodecamer of pentamers.</text>
</comment>
<comment type="similarity">
    <text evidence="1">Belongs to the DMRL synthase family.</text>
</comment>
<dbReference type="EC" id="2.5.1.78" evidence="1"/>
<dbReference type="EMBL" id="AE014299">
    <property type="protein sequence ID" value="AAN56459.1"/>
    <property type="molecule type" value="Genomic_DNA"/>
</dbReference>
<dbReference type="RefSeq" id="NP_719015.1">
    <property type="nucleotide sequence ID" value="NC_004347.2"/>
</dbReference>
<dbReference type="SMR" id="Q8EBP3"/>
<dbReference type="STRING" id="211586.SO_3466"/>
<dbReference type="PaxDb" id="211586-SO_3466"/>
<dbReference type="KEGG" id="son:SO_3466"/>
<dbReference type="PATRIC" id="fig|211586.12.peg.3365"/>
<dbReference type="eggNOG" id="COG0054">
    <property type="taxonomic scope" value="Bacteria"/>
</dbReference>
<dbReference type="HOGENOM" id="CLU_089358_1_1_6"/>
<dbReference type="OrthoDB" id="9809709at2"/>
<dbReference type="PhylomeDB" id="Q8EBP3"/>
<dbReference type="BioCyc" id="SONE211586:G1GMP-3235-MONOMER"/>
<dbReference type="UniPathway" id="UPA00275">
    <property type="reaction ID" value="UER00404"/>
</dbReference>
<dbReference type="Proteomes" id="UP000008186">
    <property type="component" value="Chromosome"/>
</dbReference>
<dbReference type="GO" id="GO:0005737">
    <property type="term" value="C:cytoplasm"/>
    <property type="evidence" value="ECO:0000318"/>
    <property type="project" value="GO_Central"/>
</dbReference>
<dbReference type="GO" id="GO:0005829">
    <property type="term" value="C:cytosol"/>
    <property type="evidence" value="ECO:0000318"/>
    <property type="project" value="GO_Central"/>
</dbReference>
<dbReference type="GO" id="GO:0009349">
    <property type="term" value="C:riboflavin synthase complex"/>
    <property type="evidence" value="ECO:0007669"/>
    <property type="project" value="InterPro"/>
</dbReference>
<dbReference type="GO" id="GO:0000906">
    <property type="term" value="F:6,7-dimethyl-8-ribityllumazine synthase activity"/>
    <property type="evidence" value="ECO:0000318"/>
    <property type="project" value="GO_Central"/>
</dbReference>
<dbReference type="GO" id="GO:0009231">
    <property type="term" value="P:riboflavin biosynthetic process"/>
    <property type="evidence" value="ECO:0000318"/>
    <property type="project" value="GO_Central"/>
</dbReference>
<dbReference type="CDD" id="cd09209">
    <property type="entry name" value="Lumazine_synthase-I"/>
    <property type="match status" value="1"/>
</dbReference>
<dbReference type="FunFam" id="3.40.50.960:FF:000001">
    <property type="entry name" value="6,7-dimethyl-8-ribityllumazine synthase"/>
    <property type="match status" value="1"/>
</dbReference>
<dbReference type="Gene3D" id="3.40.50.960">
    <property type="entry name" value="Lumazine/riboflavin synthase"/>
    <property type="match status" value="1"/>
</dbReference>
<dbReference type="HAMAP" id="MF_00178">
    <property type="entry name" value="Lumazine_synth"/>
    <property type="match status" value="1"/>
</dbReference>
<dbReference type="InterPro" id="IPR034964">
    <property type="entry name" value="LS"/>
</dbReference>
<dbReference type="InterPro" id="IPR002180">
    <property type="entry name" value="LS/RS"/>
</dbReference>
<dbReference type="InterPro" id="IPR036467">
    <property type="entry name" value="LS/RS_sf"/>
</dbReference>
<dbReference type="NCBIfam" id="TIGR00114">
    <property type="entry name" value="lumazine-synth"/>
    <property type="match status" value="1"/>
</dbReference>
<dbReference type="NCBIfam" id="NF000812">
    <property type="entry name" value="PRK00061.1-4"/>
    <property type="match status" value="1"/>
</dbReference>
<dbReference type="PANTHER" id="PTHR21058:SF0">
    <property type="entry name" value="6,7-DIMETHYL-8-RIBITYLLUMAZINE SYNTHASE"/>
    <property type="match status" value="1"/>
</dbReference>
<dbReference type="PANTHER" id="PTHR21058">
    <property type="entry name" value="6,7-DIMETHYL-8-RIBITYLLUMAZINE SYNTHASE DMRL SYNTHASE LUMAZINE SYNTHASE"/>
    <property type="match status" value="1"/>
</dbReference>
<dbReference type="Pfam" id="PF00885">
    <property type="entry name" value="DMRL_synthase"/>
    <property type="match status" value="1"/>
</dbReference>
<dbReference type="SUPFAM" id="SSF52121">
    <property type="entry name" value="Lumazine synthase"/>
    <property type="match status" value="1"/>
</dbReference>
<protein>
    <recommendedName>
        <fullName evidence="1">6,7-dimethyl-8-ribityllumazine synthase</fullName>
        <shortName evidence="1">DMRL synthase</shortName>
        <shortName evidence="1">LS</shortName>
        <shortName evidence="1">Lumazine synthase</shortName>
        <ecNumber evidence="1">2.5.1.78</ecNumber>
    </recommendedName>
</protein>
<gene>
    <name evidence="1" type="primary">ribH</name>
    <name type="ordered locus">SO_3466</name>
</gene>
<organism>
    <name type="scientific">Shewanella oneidensis (strain ATCC 700550 / JCM 31522 / CIP 106686 / LMG 19005 / NCIMB 14063 / MR-1)</name>
    <dbReference type="NCBI Taxonomy" id="211586"/>
    <lineage>
        <taxon>Bacteria</taxon>
        <taxon>Pseudomonadati</taxon>
        <taxon>Pseudomonadota</taxon>
        <taxon>Gammaproteobacteria</taxon>
        <taxon>Alteromonadales</taxon>
        <taxon>Shewanellaceae</taxon>
        <taxon>Shewanella</taxon>
    </lineage>
</organism>
<proteinExistence type="inferred from homology"/>